<name>SYV_RHOPA</name>
<comment type="function">
    <text evidence="1">Catalyzes the attachment of valine to tRNA(Val). As ValRS can inadvertently accommodate and process structurally similar amino acids such as threonine, to avoid such errors, it has a 'posttransfer' editing activity that hydrolyzes mischarged Thr-tRNA(Val) in a tRNA-dependent manner.</text>
</comment>
<comment type="catalytic activity">
    <reaction evidence="1">
        <text>tRNA(Val) + L-valine + ATP = L-valyl-tRNA(Val) + AMP + diphosphate</text>
        <dbReference type="Rhea" id="RHEA:10704"/>
        <dbReference type="Rhea" id="RHEA-COMP:9672"/>
        <dbReference type="Rhea" id="RHEA-COMP:9708"/>
        <dbReference type="ChEBI" id="CHEBI:30616"/>
        <dbReference type="ChEBI" id="CHEBI:33019"/>
        <dbReference type="ChEBI" id="CHEBI:57762"/>
        <dbReference type="ChEBI" id="CHEBI:78442"/>
        <dbReference type="ChEBI" id="CHEBI:78537"/>
        <dbReference type="ChEBI" id="CHEBI:456215"/>
        <dbReference type="EC" id="6.1.1.9"/>
    </reaction>
</comment>
<comment type="subunit">
    <text evidence="1">Monomer.</text>
</comment>
<comment type="subcellular location">
    <subcellularLocation>
        <location evidence="1">Cytoplasm</location>
    </subcellularLocation>
</comment>
<comment type="domain">
    <text evidence="1">ValRS has two distinct active sites: one for aminoacylation and one for editing. The misactivated threonine is translocated from the active site to the editing site.</text>
</comment>
<comment type="domain">
    <text evidence="1">The C-terminal coiled-coil domain is crucial for aminoacylation activity.</text>
</comment>
<comment type="similarity">
    <text evidence="1">Belongs to the class-I aminoacyl-tRNA synthetase family. ValS type 1 subfamily.</text>
</comment>
<accession>Q6N6N1</accession>
<gene>
    <name evidence="1" type="primary">valS</name>
    <name type="ordered locus">RPA2583</name>
</gene>
<proteinExistence type="inferred from homology"/>
<protein>
    <recommendedName>
        <fullName evidence="1">Valine--tRNA ligase</fullName>
        <ecNumber evidence="1">6.1.1.9</ecNumber>
    </recommendedName>
    <alternativeName>
        <fullName evidence="1">Valyl-tRNA synthetase</fullName>
        <shortName evidence="1">ValRS</shortName>
    </alternativeName>
</protein>
<organism>
    <name type="scientific">Rhodopseudomonas palustris (strain ATCC BAA-98 / CGA009)</name>
    <dbReference type="NCBI Taxonomy" id="258594"/>
    <lineage>
        <taxon>Bacteria</taxon>
        <taxon>Pseudomonadati</taxon>
        <taxon>Pseudomonadota</taxon>
        <taxon>Alphaproteobacteria</taxon>
        <taxon>Hyphomicrobiales</taxon>
        <taxon>Nitrobacteraceae</taxon>
        <taxon>Rhodopseudomonas</taxon>
    </lineage>
</organism>
<evidence type="ECO:0000255" key="1">
    <source>
        <dbReference type="HAMAP-Rule" id="MF_02004"/>
    </source>
</evidence>
<sequence length="957" mass="107229">MIEKTYQPADIEARISRAWEDAEAFKAGRPERRDAVPYSIVIPPPNVTGSLHMGHALNNTLQDILCRFERMRGRDVLWQPGTDHAGIATQMVVERQLMERQEPSRRDMGRAKFLERVWQWKAESGGVIVNQLKRLGASCDWSRERFTMDEGLSRAVAKVFVELHRQGLIYKDKRLVNWDPKLLTAISDLEVQQIEVKGNLWHLRYPIEGKTFDPADPSSFIVVATTRPETMLGDSAVAVNPEDERYTHLVGKHVILPLVGRRIPIVADEYSDPEKGSGAVKITPAHDFNDFEVGKRHHLPQINVLDIEGKISVADNSAYLEGLPEGAREFAGEIDGTDRFVARKIIVARLDDFGFLEKIEPNVHMVPHGDRSGVVIEPFLTDQWYVDAKTLAQPAIAAVRSGETTFVPKNWEKTYFEWMENIQPWCISRQLWWGHQIPAWYGPDGKVFVAETEEEAVGNALGYYVEQEVITPAQAHDMAEDPAKREGFITRDEDVLDTWFSSALWPFSTLGWPDETPELDRYYPTNVLVTGFDIIFFWVARMMMMGLHFMDDVPFPTVYIHALVRDEKGAKMSKSKGNVIDPLNLIDEYGADALRFTLAAMAAQGRDIKLATSRVEGYRNFATKLWNACRFAEMNGCVAPAGFDYTAAKETLNRWIAHETVRAVREVTEAIESYRFNDAAEAAYRFVWNVYCDWYLELAKPVLMGEEGAAKTETRAMVAWARDEILKILHPFMPFITEELWAVTAPRDGLLALAPWSRKGGISDEEVSVLAASAATDPMAGPAMLAIPEPQEPDFTDDAAEAEIGWVVDLVTAIRSVRAEMNIVPSTLTPLVLAGASADTNARASRWSDVIKRLARVGEISFADAAPQGAVQLLVRGEVAALPLKGVVDFAAEQARLEKELGKAEADIKRAEAKLANEKFVANAAEEVVEEEREKREAAVARKVKILEALLRLKNAS</sequence>
<feature type="chain" id="PRO_0000224548" description="Valine--tRNA ligase">
    <location>
        <begin position="1"/>
        <end position="957"/>
    </location>
</feature>
<feature type="coiled-coil region" evidence="1">
    <location>
        <begin position="887"/>
        <end position="946"/>
    </location>
</feature>
<feature type="short sequence motif" description="'HIGH' region">
    <location>
        <begin position="45"/>
        <end position="55"/>
    </location>
</feature>
<feature type="short sequence motif" description="'KMSKS' region">
    <location>
        <begin position="571"/>
        <end position="575"/>
    </location>
</feature>
<feature type="binding site" evidence="1">
    <location>
        <position position="574"/>
    </location>
    <ligand>
        <name>ATP</name>
        <dbReference type="ChEBI" id="CHEBI:30616"/>
    </ligand>
</feature>
<dbReference type="EC" id="6.1.1.9" evidence="1"/>
<dbReference type="EMBL" id="BX572601">
    <property type="protein sequence ID" value="CAE28024.1"/>
    <property type="molecule type" value="Genomic_DNA"/>
</dbReference>
<dbReference type="RefSeq" id="WP_011158133.1">
    <property type="nucleotide sequence ID" value="NZ_CP116810.1"/>
</dbReference>
<dbReference type="SMR" id="Q6N6N1"/>
<dbReference type="STRING" id="258594.RPA2583"/>
<dbReference type="GeneID" id="66893652"/>
<dbReference type="eggNOG" id="COG0525">
    <property type="taxonomic scope" value="Bacteria"/>
</dbReference>
<dbReference type="HOGENOM" id="CLU_001493_0_2_5"/>
<dbReference type="PhylomeDB" id="Q6N6N1"/>
<dbReference type="GO" id="GO:0005829">
    <property type="term" value="C:cytosol"/>
    <property type="evidence" value="ECO:0007669"/>
    <property type="project" value="TreeGrafter"/>
</dbReference>
<dbReference type="GO" id="GO:0002161">
    <property type="term" value="F:aminoacyl-tRNA deacylase activity"/>
    <property type="evidence" value="ECO:0007669"/>
    <property type="project" value="InterPro"/>
</dbReference>
<dbReference type="GO" id="GO:0005524">
    <property type="term" value="F:ATP binding"/>
    <property type="evidence" value="ECO:0007669"/>
    <property type="project" value="UniProtKB-UniRule"/>
</dbReference>
<dbReference type="GO" id="GO:0004832">
    <property type="term" value="F:valine-tRNA ligase activity"/>
    <property type="evidence" value="ECO:0007669"/>
    <property type="project" value="UniProtKB-UniRule"/>
</dbReference>
<dbReference type="GO" id="GO:0006438">
    <property type="term" value="P:valyl-tRNA aminoacylation"/>
    <property type="evidence" value="ECO:0007669"/>
    <property type="project" value="UniProtKB-UniRule"/>
</dbReference>
<dbReference type="CDD" id="cd07962">
    <property type="entry name" value="Anticodon_Ia_Val"/>
    <property type="match status" value="1"/>
</dbReference>
<dbReference type="CDD" id="cd00817">
    <property type="entry name" value="ValRS_core"/>
    <property type="match status" value="1"/>
</dbReference>
<dbReference type="FunFam" id="1.10.287.380:FF:000001">
    <property type="entry name" value="Valine--tRNA ligase"/>
    <property type="match status" value="1"/>
</dbReference>
<dbReference type="FunFam" id="3.40.50.620:FF:000032">
    <property type="entry name" value="Valine--tRNA ligase"/>
    <property type="match status" value="1"/>
</dbReference>
<dbReference type="FunFam" id="3.90.740.10:FF:000010">
    <property type="entry name" value="Valine--tRNA ligase"/>
    <property type="match status" value="1"/>
</dbReference>
<dbReference type="FunFam" id="3.40.50.620:FF:000078">
    <property type="entry name" value="Valine--tRNA ligase, mitochondrial"/>
    <property type="match status" value="1"/>
</dbReference>
<dbReference type="Gene3D" id="3.40.50.620">
    <property type="entry name" value="HUPs"/>
    <property type="match status" value="2"/>
</dbReference>
<dbReference type="Gene3D" id="1.10.730.10">
    <property type="entry name" value="Isoleucyl-tRNA Synthetase, Domain 1"/>
    <property type="match status" value="1"/>
</dbReference>
<dbReference type="Gene3D" id="1.10.287.380">
    <property type="entry name" value="Valyl-tRNA synthetase, C-terminal domain"/>
    <property type="match status" value="1"/>
</dbReference>
<dbReference type="Gene3D" id="3.90.740.10">
    <property type="entry name" value="Valyl/Leucyl/Isoleucyl-tRNA synthetase, editing domain"/>
    <property type="match status" value="1"/>
</dbReference>
<dbReference type="HAMAP" id="MF_02004">
    <property type="entry name" value="Val_tRNA_synth_type1"/>
    <property type="match status" value="1"/>
</dbReference>
<dbReference type="InterPro" id="IPR001412">
    <property type="entry name" value="aa-tRNA-synth_I_CS"/>
</dbReference>
<dbReference type="InterPro" id="IPR002300">
    <property type="entry name" value="aa-tRNA-synth_Ia"/>
</dbReference>
<dbReference type="InterPro" id="IPR033705">
    <property type="entry name" value="Anticodon_Ia_Val"/>
</dbReference>
<dbReference type="InterPro" id="IPR013155">
    <property type="entry name" value="M/V/L/I-tRNA-synth_anticd-bd"/>
</dbReference>
<dbReference type="InterPro" id="IPR014729">
    <property type="entry name" value="Rossmann-like_a/b/a_fold"/>
</dbReference>
<dbReference type="InterPro" id="IPR010978">
    <property type="entry name" value="tRNA-bd_arm"/>
</dbReference>
<dbReference type="InterPro" id="IPR009080">
    <property type="entry name" value="tRNAsynth_Ia_anticodon-bd"/>
</dbReference>
<dbReference type="InterPro" id="IPR037118">
    <property type="entry name" value="Val-tRNA_synth_C_sf"/>
</dbReference>
<dbReference type="InterPro" id="IPR019499">
    <property type="entry name" value="Val-tRNA_synth_tRNA-bd"/>
</dbReference>
<dbReference type="InterPro" id="IPR009008">
    <property type="entry name" value="Val/Leu/Ile-tRNA-synth_edit"/>
</dbReference>
<dbReference type="InterPro" id="IPR002303">
    <property type="entry name" value="Valyl-tRNA_ligase"/>
</dbReference>
<dbReference type="NCBIfam" id="NF004349">
    <property type="entry name" value="PRK05729.1"/>
    <property type="match status" value="1"/>
</dbReference>
<dbReference type="NCBIfam" id="TIGR00422">
    <property type="entry name" value="valS"/>
    <property type="match status" value="1"/>
</dbReference>
<dbReference type="PANTHER" id="PTHR11946:SF93">
    <property type="entry name" value="VALINE--TRNA LIGASE, CHLOROPLASTIC_MITOCHONDRIAL 2"/>
    <property type="match status" value="1"/>
</dbReference>
<dbReference type="PANTHER" id="PTHR11946">
    <property type="entry name" value="VALYL-TRNA SYNTHETASES"/>
    <property type="match status" value="1"/>
</dbReference>
<dbReference type="Pfam" id="PF08264">
    <property type="entry name" value="Anticodon_1"/>
    <property type="match status" value="1"/>
</dbReference>
<dbReference type="Pfam" id="PF00133">
    <property type="entry name" value="tRNA-synt_1"/>
    <property type="match status" value="1"/>
</dbReference>
<dbReference type="Pfam" id="PF10458">
    <property type="entry name" value="Val_tRNA-synt_C"/>
    <property type="match status" value="1"/>
</dbReference>
<dbReference type="PRINTS" id="PR00986">
    <property type="entry name" value="TRNASYNTHVAL"/>
</dbReference>
<dbReference type="SUPFAM" id="SSF47323">
    <property type="entry name" value="Anticodon-binding domain of a subclass of class I aminoacyl-tRNA synthetases"/>
    <property type="match status" value="1"/>
</dbReference>
<dbReference type="SUPFAM" id="SSF52374">
    <property type="entry name" value="Nucleotidylyl transferase"/>
    <property type="match status" value="1"/>
</dbReference>
<dbReference type="SUPFAM" id="SSF46589">
    <property type="entry name" value="tRNA-binding arm"/>
    <property type="match status" value="1"/>
</dbReference>
<dbReference type="SUPFAM" id="SSF50677">
    <property type="entry name" value="ValRS/IleRS/LeuRS editing domain"/>
    <property type="match status" value="1"/>
</dbReference>
<dbReference type="PROSITE" id="PS00178">
    <property type="entry name" value="AA_TRNA_LIGASE_I"/>
    <property type="match status" value="1"/>
</dbReference>
<reference key="1">
    <citation type="journal article" date="2004" name="Nat. Biotechnol.">
        <title>Complete genome sequence of the metabolically versatile photosynthetic bacterium Rhodopseudomonas palustris.</title>
        <authorList>
            <person name="Larimer F.W."/>
            <person name="Chain P."/>
            <person name="Hauser L."/>
            <person name="Lamerdin J.E."/>
            <person name="Malfatti S."/>
            <person name="Do L."/>
            <person name="Land M.L."/>
            <person name="Pelletier D.A."/>
            <person name="Beatty J.T."/>
            <person name="Lang A.S."/>
            <person name="Tabita F.R."/>
            <person name="Gibson J.L."/>
            <person name="Hanson T.E."/>
            <person name="Bobst C."/>
            <person name="Torres y Torres J.L."/>
            <person name="Peres C."/>
            <person name="Harrison F.H."/>
            <person name="Gibson J."/>
            <person name="Harwood C.S."/>
        </authorList>
    </citation>
    <scope>NUCLEOTIDE SEQUENCE [LARGE SCALE GENOMIC DNA]</scope>
    <source>
        <strain>ATCC BAA-98 / CGA009</strain>
    </source>
</reference>
<keyword id="KW-0030">Aminoacyl-tRNA synthetase</keyword>
<keyword id="KW-0067">ATP-binding</keyword>
<keyword id="KW-0175">Coiled coil</keyword>
<keyword id="KW-0963">Cytoplasm</keyword>
<keyword id="KW-0436">Ligase</keyword>
<keyword id="KW-0547">Nucleotide-binding</keyword>
<keyword id="KW-0648">Protein biosynthesis</keyword>